<organism>
    <name type="scientific">Escherichia coli (strain ATCC 8739 / DSM 1576 / NBRC 3972 / NCIMB 8545 / WDCM 00012 / Crooks)</name>
    <dbReference type="NCBI Taxonomy" id="481805"/>
    <lineage>
        <taxon>Bacteria</taxon>
        <taxon>Pseudomonadati</taxon>
        <taxon>Pseudomonadota</taxon>
        <taxon>Gammaproteobacteria</taxon>
        <taxon>Enterobacterales</taxon>
        <taxon>Enterobacteriaceae</taxon>
        <taxon>Escherichia</taxon>
    </lineage>
</organism>
<name>ISPE_ECOLC</name>
<reference key="1">
    <citation type="submission" date="2008-02" db="EMBL/GenBank/DDBJ databases">
        <title>Complete sequence of Escherichia coli C str. ATCC 8739.</title>
        <authorList>
            <person name="Copeland A."/>
            <person name="Lucas S."/>
            <person name="Lapidus A."/>
            <person name="Glavina del Rio T."/>
            <person name="Dalin E."/>
            <person name="Tice H."/>
            <person name="Bruce D."/>
            <person name="Goodwin L."/>
            <person name="Pitluck S."/>
            <person name="Kiss H."/>
            <person name="Brettin T."/>
            <person name="Detter J.C."/>
            <person name="Han C."/>
            <person name="Kuske C.R."/>
            <person name="Schmutz J."/>
            <person name="Larimer F."/>
            <person name="Land M."/>
            <person name="Hauser L."/>
            <person name="Kyrpides N."/>
            <person name="Mikhailova N."/>
            <person name="Ingram L."/>
            <person name="Richardson P."/>
        </authorList>
    </citation>
    <scope>NUCLEOTIDE SEQUENCE [LARGE SCALE GENOMIC DNA]</scope>
    <source>
        <strain>ATCC 8739 / DSM 1576 / NBRC 3972 / NCIMB 8545 / WDCM 00012 / Crooks</strain>
    </source>
</reference>
<protein>
    <recommendedName>
        <fullName evidence="1">4-diphosphocytidyl-2-C-methyl-D-erythritol kinase</fullName>
        <shortName evidence="1">CMK</shortName>
        <ecNumber evidence="1">2.7.1.148</ecNumber>
    </recommendedName>
    <alternativeName>
        <fullName evidence="1">4-(cytidine-5'-diphospho)-2-C-methyl-D-erythritol kinase</fullName>
    </alternativeName>
</protein>
<dbReference type="EC" id="2.7.1.148" evidence="1"/>
<dbReference type="EMBL" id="CP000946">
    <property type="protein sequence ID" value="ACA78052.1"/>
    <property type="molecule type" value="Genomic_DNA"/>
</dbReference>
<dbReference type="RefSeq" id="WP_001260323.1">
    <property type="nucleotide sequence ID" value="NZ_MTFT01000016.1"/>
</dbReference>
<dbReference type="SMR" id="B1IU85"/>
<dbReference type="KEGG" id="ecl:EcolC_2418"/>
<dbReference type="HOGENOM" id="CLU_053057_3_0_6"/>
<dbReference type="UniPathway" id="UPA00056">
    <property type="reaction ID" value="UER00094"/>
</dbReference>
<dbReference type="GO" id="GO:0050515">
    <property type="term" value="F:4-(cytidine 5'-diphospho)-2-C-methyl-D-erythritol kinase activity"/>
    <property type="evidence" value="ECO:0007669"/>
    <property type="project" value="UniProtKB-UniRule"/>
</dbReference>
<dbReference type="GO" id="GO:0005524">
    <property type="term" value="F:ATP binding"/>
    <property type="evidence" value="ECO:0007669"/>
    <property type="project" value="UniProtKB-UniRule"/>
</dbReference>
<dbReference type="GO" id="GO:0019288">
    <property type="term" value="P:isopentenyl diphosphate biosynthetic process, methylerythritol 4-phosphate pathway"/>
    <property type="evidence" value="ECO:0007669"/>
    <property type="project" value="UniProtKB-UniRule"/>
</dbReference>
<dbReference type="GO" id="GO:0016114">
    <property type="term" value="P:terpenoid biosynthetic process"/>
    <property type="evidence" value="ECO:0007669"/>
    <property type="project" value="InterPro"/>
</dbReference>
<dbReference type="FunFam" id="3.30.230.10:FF:000022">
    <property type="entry name" value="4-diphosphocytidyl-2-C-methyl-D-erythritol kinase"/>
    <property type="match status" value="1"/>
</dbReference>
<dbReference type="FunFam" id="3.30.70.890:FF:000004">
    <property type="entry name" value="4-diphosphocytidyl-2-C-methyl-D-erythritol kinase"/>
    <property type="match status" value="1"/>
</dbReference>
<dbReference type="Gene3D" id="3.30.230.10">
    <property type="match status" value="1"/>
</dbReference>
<dbReference type="Gene3D" id="3.30.70.890">
    <property type="entry name" value="GHMP kinase, C-terminal domain"/>
    <property type="match status" value="1"/>
</dbReference>
<dbReference type="HAMAP" id="MF_00061">
    <property type="entry name" value="IspE"/>
    <property type="match status" value="1"/>
</dbReference>
<dbReference type="InterPro" id="IPR013750">
    <property type="entry name" value="GHMP_kinase_C_dom"/>
</dbReference>
<dbReference type="InterPro" id="IPR036554">
    <property type="entry name" value="GHMP_kinase_C_sf"/>
</dbReference>
<dbReference type="InterPro" id="IPR006204">
    <property type="entry name" value="GHMP_kinase_N_dom"/>
</dbReference>
<dbReference type="InterPro" id="IPR004424">
    <property type="entry name" value="IspE"/>
</dbReference>
<dbReference type="InterPro" id="IPR020568">
    <property type="entry name" value="Ribosomal_Su5_D2-typ_SF"/>
</dbReference>
<dbReference type="InterPro" id="IPR014721">
    <property type="entry name" value="Ribsml_uS5_D2-typ_fold_subgr"/>
</dbReference>
<dbReference type="NCBIfam" id="TIGR00154">
    <property type="entry name" value="ispE"/>
    <property type="match status" value="1"/>
</dbReference>
<dbReference type="PANTHER" id="PTHR43527">
    <property type="entry name" value="4-DIPHOSPHOCYTIDYL-2-C-METHYL-D-ERYTHRITOL KINASE, CHLOROPLASTIC"/>
    <property type="match status" value="1"/>
</dbReference>
<dbReference type="PANTHER" id="PTHR43527:SF2">
    <property type="entry name" value="4-DIPHOSPHOCYTIDYL-2-C-METHYL-D-ERYTHRITOL KINASE, CHLOROPLASTIC"/>
    <property type="match status" value="1"/>
</dbReference>
<dbReference type="Pfam" id="PF08544">
    <property type="entry name" value="GHMP_kinases_C"/>
    <property type="match status" value="1"/>
</dbReference>
<dbReference type="Pfam" id="PF00288">
    <property type="entry name" value="GHMP_kinases_N"/>
    <property type="match status" value="1"/>
</dbReference>
<dbReference type="PIRSF" id="PIRSF010376">
    <property type="entry name" value="IspE"/>
    <property type="match status" value="1"/>
</dbReference>
<dbReference type="SUPFAM" id="SSF55060">
    <property type="entry name" value="GHMP Kinase, C-terminal domain"/>
    <property type="match status" value="1"/>
</dbReference>
<dbReference type="SUPFAM" id="SSF54211">
    <property type="entry name" value="Ribosomal protein S5 domain 2-like"/>
    <property type="match status" value="1"/>
</dbReference>
<proteinExistence type="inferred from homology"/>
<comment type="function">
    <text evidence="1">Catalyzes the phosphorylation of the position 2 hydroxy group of 4-diphosphocytidyl-2C-methyl-D-erythritol.</text>
</comment>
<comment type="catalytic activity">
    <reaction evidence="1">
        <text>4-CDP-2-C-methyl-D-erythritol + ATP = 4-CDP-2-C-methyl-D-erythritol 2-phosphate + ADP + H(+)</text>
        <dbReference type="Rhea" id="RHEA:18437"/>
        <dbReference type="ChEBI" id="CHEBI:15378"/>
        <dbReference type="ChEBI" id="CHEBI:30616"/>
        <dbReference type="ChEBI" id="CHEBI:57823"/>
        <dbReference type="ChEBI" id="CHEBI:57919"/>
        <dbReference type="ChEBI" id="CHEBI:456216"/>
        <dbReference type="EC" id="2.7.1.148"/>
    </reaction>
</comment>
<comment type="pathway">
    <text evidence="1">Isoprenoid biosynthesis; isopentenyl diphosphate biosynthesis via DXP pathway; isopentenyl diphosphate from 1-deoxy-D-xylulose 5-phosphate: step 3/6.</text>
</comment>
<comment type="subunit">
    <text evidence="1">Homodimer.</text>
</comment>
<comment type="similarity">
    <text evidence="1">Belongs to the GHMP kinase family. IspE subfamily.</text>
</comment>
<accession>B1IU85</accession>
<sequence>MRTQWPSPAKLNLFLYITGQRADGYHTLQTLFQFLDYGDTISIELRDDGDIRLLTPVEGVEHEDNLIVRAARLLMKTAADSGRLPTGSGADISIDKRLPMGGGLGGGSSNAATVLVALNHLWQCGLSMDELAEMGLTLGADVPVFVRGHAAFAEGVGEILTPVDPPEKWYLVAHPGVSIPTPVIFKDPELPRNTPKRSIETLLKCEFSNDCEVIARKRFREVDAVLSWLLEYAPSRLTGTGACVFAEFDTESEARQVLEQAPEWLNGFVAKGVNLSPLHRAML</sequence>
<keyword id="KW-0067">ATP-binding</keyword>
<keyword id="KW-0414">Isoprene biosynthesis</keyword>
<keyword id="KW-0418">Kinase</keyword>
<keyword id="KW-0547">Nucleotide-binding</keyword>
<keyword id="KW-0808">Transferase</keyword>
<feature type="chain" id="PRO_1000075047" description="4-diphosphocytidyl-2-C-methyl-D-erythritol kinase">
    <location>
        <begin position="1"/>
        <end position="283"/>
    </location>
</feature>
<feature type="active site" evidence="1">
    <location>
        <position position="10"/>
    </location>
</feature>
<feature type="active site" evidence="1">
    <location>
        <position position="141"/>
    </location>
</feature>
<feature type="binding site" evidence="1">
    <location>
        <begin position="99"/>
        <end position="109"/>
    </location>
    <ligand>
        <name>ATP</name>
        <dbReference type="ChEBI" id="CHEBI:30616"/>
    </ligand>
</feature>
<gene>
    <name evidence="1" type="primary">ispE</name>
    <name type="ordered locus">EcolC_2418</name>
</gene>
<evidence type="ECO:0000255" key="1">
    <source>
        <dbReference type="HAMAP-Rule" id="MF_00061"/>
    </source>
</evidence>